<organism>
    <name type="scientific">Rickettsia akari (strain Hartford)</name>
    <dbReference type="NCBI Taxonomy" id="293614"/>
    <lineage>
        <taxon>Bacteria</taxon>
        <taxon>Pseudomonadati</taxon>
        <taxon>Pseudomonadota</taxon>
        <taxon>Alphaproteobacteria</taxon>
        <taxon>Rickettsiales</taxon>
        <taxon>Rickettsiaceae</taxon>
        <taxon>Rickettsieae</taxon>
        <taxon>Rickettsia</taxon>
        <taxon>spotted fever group</taxon>
    </lineage>
</organism>
<protein>
    <recommendedName>
        <fullName evidence="1">ATP synthase subunit alpha</fullName>
        <ecNumber evidence="1">7.1.2.2</ecNumber>
    </recommendedName>
    <alternativeName>
        <fullName evidence="1">ATP synthase F1 sector subunit alpha</fullName>
    </alternativeName>
    <alternativeName>
        <fullName evidence="1">F-ATPase subunit alpha</fullName>
    </alternativeName>
</protein>
<reference key="1">
    <citation type="submission" date="2007-09" db="EMBL/GenBank/DDBJ databases">
        <title>Complete genome sequence of Rickettsia akari.</title>
        <authorList>
            <person name="Madan A."/>
            <person name="Fahey J."/>
            <person name="Helton E."/>
            <person name="Ketteman M."/>
            <person name="Madan A."/>
            <person name="Rodrigues S."/>
            <person name="Sanchez A."/>
            <person name="Whiting M."/>
            <person name="Dasch G."/>
            <person name="Eremeeva M."/>
        </authorList>
    </citation>
    <scope>NUCLEOTIDE SEQUENCE [LARGE SCALE GENOMIC DNA]</scope>
    <source>
        <strain>Hartford</strain>
    </source>
</reference>
<name>ATPA_RICAH</name>
<gene>
    <name evidence="1" type="primary">atpA</name>
    <name type="ordered locus">A1C_06200</name>
</gene>
<accession>A8GPZ6</accession>
<dbReference type="EC" id="7.1.2.2" evidence="1"/>
<dbReference type="EMBL" id="CP000847">
    <property type="protein sequence ID" value="ABV75471.1"/>
    <property type="molecule type" value="Genomic_DNA"/>
</dbReference>
<dbReference type="RefSeq" id="WP_012150100.1">
    <property type="nucleotide sequence ID" value="NC_009881.1"/>
</dbReference>
<dbReference type="SMR" id="A8GPZ6"/>
<dbReference type="STRING" id="293614.A1C_06200"/>
<dbReference type="KEGG" id="rak:A1C_06200"/>
<dbReference type="eggNOG" id="COG0056">
    <property type="taxonomic scope" value="Bacteria"/>
</dbReference>
<dbReference type="HOGENOM" id="CLU_010091_2_1_5"/>
<dbReference type="Proteomes" id="UP000006830">
    <property type="component" value="Chromosome"/>
</dbReference>
<dbReference type="GO" id="GO:0005886">
    <property type="term" value="C:plasma membrane"/>
    <property type="evidence" value="ECO:0007669"/>
    <property type="project" value="UniProtKB-SubCell"/>
</dbReference>
<dbReference type="GO" id="GO:0045259">
    <property type="term" value="C:proton-transporting ATP synthase complex"/>
    <property type="evidence" value="ECO:0007669"/>
    <property type="project" value="UniProtKB-KW"/>
</dbReference>
<dbReference type="GO" id="GO:0043531">
    <property type="term" value="F:ADP binding"/>
    <property type="evidence" value="ECO:0007669"/>
    <property type="project" value="TreeGrafter"/>
</dbReference>
<dbReference type="GO" id="GO:0005524">
    <property type="term" value="F:ATP binding"/>
    <property type="evidence" value="ECO:0007669"/>
    <property type="project" value="UniProtKB-UniRule"/>
</dbReference>
<dbReference type="GO" id="GO:0046933">
    <property type="term" value="F:proton-transporting ATP synthase activity, rotational mechanism"/>
    <property type="evidence" value="ECO:0007669"/>
    <property type="project" value="UniProtKB-UniRule"/>
</dbReference>
<dbReference type="CDD" id="cd18113">
    <property type="entry name" value="ATP-synt_F1_alpha_C"/>
    <property type="match status" value="1"/>
</dbReference>
<dbReference type="CDD" id="cd18116">
    <property type="entry name" value="ATP-synt_F1_alpha_N"/>
    <property type="match status" value="1"/>
</dbReference>
<dbReference type="CDD" id="cd01132">
    <property type="entry name" value="F1-ATPase_alpha_CD"/>
    <property type="match status" value="1"/>
</dbReference>
<dbReference type="FunFam" id="1.20.150.20:FF:000001">
    <property type="entry name" value="ATP synthase subunit alpha"/>
    <property type="match status" value="1"/>
</dbReference>
<dbReference type="FunFam" id="2.40.30.20:FF:000001">
    <property type="entry name" value="ATP synthase subunit alpha"/>
    <property type="match status" value="1"/>
</dbReference>
<dbReference type="FunFam" id="3.40.50.300:FF:002432">
    <property type="entry name" value="ATP synthase subunit alpha, mitochondrial"/>
    <property type="match status" value="1"/>
</dbReference>
<dbReference type="Gene3D" id="2.40.30.20">
    <property type="match status" value="1"/>
</dbReference>
<dbReference type="Gene3D" id="1.20.150.20">
    <property type="entry name" value="ATP synthase alpha/beta chain, C-terminal domain"/>
    <property type="match status" value="1"/>
</dbReference>
<dbReference type="Gene3D" id="3.40.50.300">
    <property type="entry name" value="P-loop containing nucleotide triphosphate hydrolases"/>
    <property type="match status" value="1"/>
</dbReference>
<dbReference type="HAMAP" id="MF_01346">
    <property type="entry name" value="ATP_synth_alpha_bact"/>
    <property type="match status" value="1"/>
</dbReference>
<dbReference type="InterPro" id="IPR023366">
    <property type="entry name" value="ATP_synth_asu-like_sf"/>
</dbReference>
<dbReference type="InterPro" id="IPR000793">
    <property type="entry name" value="ATP_synth_asu_C"/>
</dbReference>
<dbReference type="InterPro" id="IPR038376">
    <property type="entry name" value="ATP_synth_asu_C_sf"/>
</dbReference>
<dbReference type="InterPro" id="IPR033732">
    <property type="entry name" value="ATP_synth_F1_a_nt-bd_dom"/>
</dbReference>
<dbReference type="InterPro" id="IPR005294">
    <property type="entry name" value="ATP_synth_F1_asu"/>
</dbReference>
<dbReference type="InterPro" id="IPR020003">
    <property type="entry name" value="ATPase_a/bsu_AS"/>
</dbReference>
<dbReference type="InterPro" id="IPR004100">
    <property type="entry name" value="ATPase_F1/V1/A1_a/bsu_N"/>
</dbReference>
<dbReference type="InterPro" id="IPR036121">
    <property type="entry name" value="ATPase_F1/V1/A1_a/bsu_N_sf"/>
</dbReference>
<dbReference type="InterPro" id="IPR000194">
    <property type="entry name" value="ATPase_F1/V1/A1_a/bsu_nucl-bd"/>
</dbReference>
<dbReference type="InterPro" id="IPR027417">
    <property type="entry name" value="P-loop_NTPase"/>
</dbReference>
<dbReference type="NCBIfam" id="TIGR00962">
    <property type="entry name" value="atpA"/>
    <property type="match status" value="1"/>
</dbReference>
<dbReference type="NCBIfam" id="NF009884">
    <property type="entry name" value="PRK13343.1"/>
    <property type="match status" value="1"/>
</dbReference>
<dbReference type="PANTHER" id="PTHR48082">
    <property type="entry name" value="ATP SYNTHASE SUBUNIT ALPHA, MITOCHONDRIAL"/>
    <property type="match status" value="1"/>
</dbReference>
<dbReference type="PANTHER" id="PTHR48082:SF2">
    <property type="entry name" value="ATP SYNTHASE SUBUNIT ALPHA, MITOCHONDRIAL"/>
    <property type="match status" value="1"/>
</dbReference>
<dbReference type="Pfam" id="PF00006">
    <property type="entry name" value="ATP-synt_ab"/>
    <property type="match status" value="1"/>
</dbReference>
<dbReference type="Pfam" id="PF00306">
    <property type="entry name" value="ATP-synt_ab_C"/>
    <property type="match status" value="1"/>
</dbReference>
<dbReference type="Pfam" id="PF02874">
    <property type="entry name" value="ATP-synt_ab_N"/>
    <property type="match status" value="1"/>
</dbReference>
<dbReference type="PIRSF" id="PIRSF039088">
    <property type="entry name" value="F_ATPase_subunit_alpha"/>
    <property type="match status" value="1"/>
</dbReference>
<dbReference type="SUPFAM" id="SSF47917">
    <property type="entry name" value="C-terminal domain of alpha and beta subunits of F1 ATP synthase"/>
    <property type="match status" value="1"/>
</dbReference>
<dbReference type="SUPFAM" id="SSF50615">
    <property type="entry name" value="N-terminal domain of alpha and beta subunits of F1 ATP synthase"/>
    <property type="match status" value="1"/>
</dbReference>
<dbReference type="SUPFAM" id="SSF52540">
    <property type="entry name" value="P-loop containing nucleoside triphosphate hydrolases"/>
    <property type="match status" value="1"/>
</dbReference>
<dbReference type="PROSITE" id="PS00152">
    <property type="entry name" value="ATPASE_ALPHA_BETA"/>
    <property type="match status" value="1"/>
</dbReference>
<proteinExistence type="inferred from homology"/>
<sequence length="512" mass="56196">MKLKPIEVAEILQKEIANINCLSEIKEVGQVISVGDGIAKIYGLANVKSGEVVEFKSGVKGLVLNLENDSVSAVIMGDDNQVQQGDNVKRTKEVLEVPVGKALLGRVVDALGNPIDGKGDIASKEYRHIAMKAPGIIERTSVSEPVQTGIKAIDSLIPIGRGQRELIIGDRQTGKTAIAVDTIINQKQAHSLTNESDKIYCIYVAIGQKRSSVAQIVKKLEDAGAMDYTIVVSATASEAASLQFIAPYSACSMGEYFRDNGMHALIIYDDLSKHAVAYRQISLLLRRPPGREAYPGDVFYLHSRLLERAAKMSEEKGNGSLTALPIIETQAGDVSAYIPTNVISITDGQIFLESELFYKGVRPAVNVGISVSRVGSAAQIKAMKQVAGSVKLELAQFRELESFSQFGSDLDPATKAQIDHGKRLVEILKQAQYRPLPVEEQIISLYVGTKKYLNDVPLQKVKEFEDKMLTEIRLNKKDILESIKNEQRITEETEQKLKAFLENFVKAYCVMP</sequence>
<comment type="function">
    <text evidence="1">Produces ATP from ADP in the presence of a proton gradient across the membrane. The alpha chain is a regulatory subunit.</text>
</comment>
<comment type="catalytic activity">
    <reaction evidence="1">
        <text>ATP + H2O + 4 H(+)(in) = ADP + phosphate + 5 H(+)(out)</text>
        <dbReference type="Rhea" id="RHEA:57720"/>
        <dbReference type="ChEBI" id="CHEBI:15377"/>
        <dbReference type="ChEBI" id="CHEBI:15378"/>
        <dbReference type="ChEBI" id="CHEBI:30616"/>
        <dbReference type="ChEBI" id="CHEBI:43474"/>
        <dbReference type="ChEBI" id="CHEBI:456216"/>
        <dbReference type="EC" id="7.1.2.2"/>
    </reaction>
</comment>
<comment type="subunit">
    <text evidence="1">F-type ATPases have 2 components, CF(1) - the catalytic core - and CF(0) - the membrane proton channel. CF(1) has five subunits: alpha(3), beta(3), gamma(1), delta(1), epsilon(1). CF(0) has three main subunits: a(1), b(2) and c(9-12). The alpha and beta chains form an alternating ring which encloses part of the gamma chain. CF(1) is attached to CF(0) by a central stalk formed by the gamma and epsilon chains, while a peripheral stalk is formed by the delta and b chains.</text>
</comment>
<comment type="subcellular location">
    <subcellularLocation>
        <location evidence="1">Cell inner membrane</location>
        <topology evidence="1">Peripheral membrane protein</topology>
    </subcellularLocation>
</comment>
<comment type="similarity">
    <text evidence="1">Belongs to the ATPase alpha/beta chains family.</text>
</comment>
<evidence type="ECO:0000255" key="1">
    <source>
        <dbReference type="HAMAP-Rule" id="MF_01346"/>
    </source>
</evidence>
<keyword id="KW-0066">ATP synthesis</keyword>
<keyword id="KW-0067">ATP-binding</keyword>
<keyword id="KW-0997">Cell inner membrane</keyword>
<keyword id="KW-1003">Cell membrane</keyword>
<keyword id="KW-0139">CF(1)</keyword>
<keyword id="KW-0375">Hydrogen ion transport</keyword>
<keyword id="KW-0406">Ion transport</keyword>
<keyword id="KW-0472">Membrane</keyword>
<keyword id="KW-0547">Nucleotide-binding</keyword>
<keyword id="KW-1278">Translocase</keyword>
<keyword id="KW-0813">Transport</keyword>
<feature type="chain" id="PRO_1000055076" description="ATP synthase subunit alpha">
    <location>
        <begin position="1"/>
        <end position="512"/>
    </location>
</feature>
<feature type="binding site" evidence="1">
    <location>
        <begin position="169"/>
        <end position="176"/>
    </location>
    <ligand>
        <name>ATP</name>
        <dbReference type="ChEBI" id="CHEBI:30616"/>
    </ligand>
</feature>
<feature type="site" description="Required for activity" evidence="1">
    <location>
        <position position="370"/>
    </location>
</feature>